<reference key="1">
    <citation type="journal article" date="2009" name="PLoS Genet.">
        <title>Organised genome dynamics in the Escherichia coli species results in highly diverse adaptive paths.</title>
        <authorList>
            <person name="Touchon M."/>
            <person name="Hoede C."/>
            <person name="Tenaillon O."/>
            <person name="Barbe V."/>
            <person name="Baeriswyl S."/>
            <person name="Bidet P."/>
            <person name="Bingen E."/>
            <person name="Bonacorsi S."/>
            <person name="Bouchier C."/>
            <person name="Bouvet O."/>
            <person name="Calteau A."/>
            <person name="Chiapello H."/>
            <person name="Clermont O."/>
            <person name="Cruveiller S."/>
            <person name="Danchin A."/>
            <person name="Diard M."/>
            <person name="Dossat C."/>
            <person name="Karoui M.E."/>
            <person name="Frapy E."/>
            <person name="Garry L."/>
            <person name="Ghigo J.M."/>
            <person name="Gilles A.M."/>
            <person name="Johnson J."/>
            <person name="Le Bouguenec C."/>
            <person name="Lescat M."/>
            <person name="Mangenot S."/>
            <person name="Martinez-Jehanne V."/>
            <person name="Matic I."/>
            <person name="Nassif X."/>
            <person name="Oztas S."/>
            <person name="Petit M.A."/>
            <person name="Pichon C."/>
            <person name="Rouy Z."/>
            <person name="Ruf C.S."/>
            <person name="Schneider D."/>
            <person name="Tourret J."/>
            <person name="Vacherie B."/>
            <person name="Vallenet D."/>
            <person name="Medigue C."/>
            <person name="Rocha E.P.C."/>
            <person name="Denamur E."/>
        </authorList>
    </citation>
    <scope>NUCLEOTIDE SEQUENCE [LARGE SCALE GENOMIC DNA]</scope>
    <source>
        <strain>ED1a</strain>
    </source>
</reference>
<comment type="function">
    <text evidence="1">Part of the high-affinity ATP-driven potassium transport (or Kdp) system, which catalyzes the hydrolysis of ATP coupled with the electrogenic transport of potassium into the cytoplasm. This subunit is responsible for energy coupling to the transport system and for the release of the potassium ions to the cytoplasm.</text>
</comment>
<comment type="catalytic activity">
    <reaction evidence="1">
        <text>K(+)(out) + ATP + H2O = K(+)(in) + ADP + phosphate + H(+)</text>
        <dbReference type="Rhea" id="RHEA:16777"/>
        <dbReference type="ChEBI" id="CHEBI:15377"/>
        <dbReference type="ChEBI" id="CHEBI:15378"/>
        <dbReference type="ChEBI" id="CHEBI:29103"/>
        <dbReference type="ChEBI" id="CHEBI:30616"/>
        <dbReference type="ChEBI" id="CHEBI:43474"/>
        <dbReference type="ChEBI" id="CHEBI:456216"/>
        <dbReference type="EC" id="7.2.2.6"/>
    </reaction>
    <physiologicalReaction direction="left-to-right" evidence="1">
        <dbReference type="Rhea" id="RHEA:16778"/>
    </physiologicalReaction>
</comment>
<comment type="subunit">
    <text evidence="1">The system is composed of three essential subunits: KdpA, KdpB and KdpC.</text>
</comment>
<comment type="subcellular location">
    <subcellularLocation>
        <location evidence="1">Cell inner membrane</location>
        <topology evidence="1">Multi-pass membrane protein</topology>
    </subcellularLocation>
</comment>
<comment type="similarity">
    <text evidence="1">Belongs to the cation transport ATPase (P-type) (TC 3.A.3) family. Type IA subfamily.</text>
</comment>
<gene>
    <name evidence="1" type="primary">kdpB</name>
    <name type="ordered locus">ECED1_0676</name>
</gene>
<protein>
    <recommendedName>
        <fullName evidence="1">Potassium-transporting ATPase ATP-binding subunit</fullName>
        <ecNumber evidence="1">7.2.2.6</ecNumber>
    </recommendedName>
    <alternativeName>
        <fullName evidence="1">ATP phosphohydrolase [potassium-transporting] B chain</fullName>
    </alternativeName>
    <alternativeName>
        <fullName evidence="1">Potassium-binding and translocating subunit B</fullName>
    </alternativeName>
    <alternativeName>
        <fullName evidence="1">Potassium-translocating ATPase B chain</fullName>
    </alternativeName>
</protein>
<accession>B7MPK0</accession>
<organism>
    <name type="scientific">Escherichia coli O81 (strain ED1a)</name>
    <dbReference type="NCBI Taxonomy" id="585397"/>
    <lineage>
        <taxon>Bacteria</taxon>
        <taxon>Pseudomonadati</taxon>
        <taxon>Pseudomonadota</taxon>
        <taxon>Gammaproteobacteria</taxon>
        <taxon>Enterobacterales</taxon>
        <taxon>Enterobacteriaceae</taxon>
        <taxon>Escherichia</taxon>
    </lineage>
</organism>
<feature type="chain" id="PRO_1000132606" description="Potassium-transporting ATPase ATP-binding subunit">
    <location>
        <begin position="1"/>
        <end position="682"/>
    </location>
</feature>
<feature type="transmembrane region" description="Helical" evidence="1">
    <location>
        <begin position="34"/>
        <end position="54"/>
    </location>
</feature>
<feature type="transmembrane region" description="Helical" evidence="1">
    <location>
        <begin position="62"/>
        <end position="82"/>
    </location>
</feature>
<feature type="transmembrane region" description="Helical" evidence="1">
    <location>
        <begin position="219"/>
        <end position="239"/>
    </location>
</feature>
<feature type="transmembrane region" description="Helical" evidence="1">
    <location>
        <begin position="254"/>
        <end position="274"/>
    </location>
</feature>
<feature type="transmembrane region" description="Helical" evidence="1">
    <location>
        <begin position="588"/>
        <end position="608"/>
    </location>
</feature>
<feature type="transmembrane region" description="Helical" evidence="1">
    <location>
        <begin position="616"/>
        <end position="636"/>
    </location>
</feature>
<feature type="transmembrane region" description="Helical" evidence="1">
    <location>
        <begin position="662"/>
        <end position="682"/>
    </location>
</feature>
<feature type="active site" description="4-aspartylphosphate intermediate" evidence="1">
    <location>
        <position position="307"/>
    </location>
</feature>
<feature type="binding site" evidence="1">
    <location>
        <position position="344"/>
    </location>
    <ligand>
        <name>ATP</name>
        <dbReference type="ChEBI" id="CHEBI:30616"/>
    </ligand>
</feature>
<feature type="binding site" evidence="1">
    <location>
        <position position="348"/>
    </location>
    <ligand>
        <name>ATP</name>
        <dbReference type="ChEBI" id="CHEBI:30616"/>
    </ligand>
</feature>
<feature type="binding site" evidence="1">
    <location>
        <begin position="377"/>
        <end position="384"/>
    </location>
    <ligand>
        <name>ATP</name>
        <dbReference type="ChEBI" id="CHEBI:30616"/>
    </ligand>
</feature>
<feature type="binding site" evidence="1">
    <location>
        <position position="395"/>
    </location>
    <ligand>
        <name>ATP</name>
        <dbReference type="ChEBI" id="CHEBI:30616"/>
    </ligand>
</feature>
<feature type="binding site" evidence="1">
    <location>
        <position position="518"/>
    </location>
    <ligand>
        <name>Mg(2+)</name>
        <dbReference type="ChEBI" id="CHEBI:18420"/>
    </ligand>
</feature>
<feature type="binding site" evidence="1">
    <location>
        <position position="522"/>
    </location>
    <ligand>
        <name>Mg(2+)</name>
        <dbReference type="ChEBI" id="CHEBI:18420"/>
    </ligand>
</feature>
<sequence length="682" mass="72234">MSRKQLALFEPTLVVQALKEAVKKLNPQAQWRNPVMFIVWIGSLLTTCISIAMASGVMPGNALFSAAISGWLWVTVLFANFAEALAEGRSKAQANSLKGVKKTAFARKLREPKYGAAADKVPADQLRKGDIVLVEAGDIIPCDGEVIEGGASVDESAITGESAPVIRESGGDFASVTGGTRILSDWLVIECSVNPGETFLDRMIAMVEGAQRRKTPNEIALTILLIALTIVFLLATATLWPFSAWGGNAVSVTVLVALLVCLIPTTIGGLLSAIGVAGMSRMLGANVIATSGRAVEAAGDVDVLLLDKTGTITLGNRQASEFIPAQGVEEKALADAAQLASLADETPEGRSIVILAKQRFNLRERDVQSLHATFVPFTAQSRMSGINIDNRMIRKGSVDAIRRHVEANGGHFPADVDQKVDQVARQGATPLVVVEGSRVLGVIALKDIVKGGIKERFAQLRKMGIKTVMITGDNRLTAAAIAAEAGVDDFLAEATPEAKLALIRQYQAEGRLVAMTGDGTNDAPALAQADVAVAMNSGTQAAKEAGNMVDLDSNPTKLIEVVHIGKQMLMTRGSLTTFSIANDVAKYFAIIPAAFAATYPQLNALNIMRLHSPDSAILSAVIFNALIIVFLIPLALKGVSYKPLTASAMLRRNLWIYGLGGLLVPFIGIKVIDLLLTICGLV</sequence>
<keyword id="KW-0067">ATP-binding</keyword>
<keyword id="KW-0997">Cell inner membrane</keyword>
<keyword id="KW-1003">Cell membrane</keyword>
<keyword id="KW-0406">Ion transport</keyword>
<keyword id="KW-0460">Magnesium</keyword>
<keyword id="KW-0472">Membrane</keyword>
<keyword id="KW-0479">Metal-binding</keyword>
<keyword id="KW-0547">Nucleotide-binding</keyword>
<keyword id="KW-0597">Phosphoprotein</keyword>
<keyword id="KW-0630">Potassium</keyword>
<keyword id="KW-0633">Potassium transport</keyword>
<keyword id="KW-1278">Translocase</keyword>
<keyword id="KW-0812">Transmembrane</keyword>
<keyword id="KW-1133">Transmembrane helix</keyword>
<keyword id="KW-0813">Transport</keyword>
<evidence type="ECO:0000255" key="1">
    <source>
        <dbReference type="HAMAP-Rule" id="MF_00285"/>
    </source>
</evidence>
<proteinExistence type="inferred from homology"/>
<dbReference type="EC" id="7.2.2.6" evidence="1"/>
<dbReference type="EMBL" id="CU928162">
    <property type="protein sequence ID" value="CAR06882.1"/>
    <property type="molecule type" value="Genomic_DNA"/>
</dbReference>
<dbReference type="RefSeq" id="WP_000087997.1">
    <property type="nucleotide sequence ID" value="NC_011745.1"/>
</dbReference>
<dbReference type="SMR" id="B7MPK0"/>
<dbReference type="KEGG" id="ecq:ECED1_0676"/>
<dbReference type="HOGENOM" id="CLU_025728_2_0_6"/>
<dbReference type="Proteomes" id="UP000000748">
    <property type="component" value="Chromosome"/>
</dbReference>
<dbReference type="GO" id="GO:0005886">
    <property type="term" value="C:plasma membrane"/>
    <property type="evidence" value="ECO:0007669"/>
    <property type="project" value="UniProtKB-SubCell"/>
</dbReference>
<dbReference type="GO" id="GO:0005524">
    <property type="term" value="F:ATP binding"/>
    <property type="evidence" value="ECO:0007669"/>
    <property type="project" value="UniProtKB-UniRule"/>
</dbReference>
<dbReference type="GO" id="GO:0016887">
    <property type="term" value="F:ATP hydrolysis activity"/>
    <property type="evidence" value="ECO:0007669"/>
    <property type="project" value="InterPro"/>
</dbReference>
<dbReference type="GO" id="GO:0000287">
    <property type="term" value="F:magnesium ion binding"/>
    <property type="evidence" value="ECO:0007669"/>
    <property type="project" value="UniProtKB-UniRule"/>
</dbReference>
<dbReference type="GO" id="GO:0008556">
    <property type="term" value="F:P-type potassium transmembrane transporter activity"/>
    <property type="evidence" value="ECO:0007669"/>
    <property type="project" value="UniProtKB-UniRule"/>
</dbReference>
<dbReference type="CDD" id="cd02078">
    <property type="entry name" value="P-type_ATPase_K"/>
    <property type="match status" value="1"/>
</dbReference>
<dbReference type="FunFam" id="2.70.150.10:FF:000010">
    <property type="entry name" value="Potassium-transporting ATPase ATP-binding subunit"/>
    <property type="match status" value="1"/>
</dbReference>
<dbReference type="FunFam" id="3.40.1110.10:FF:000007">
    <property type="entry name" value="Potassium-transporting ATPase ATP-binding subunit"/>
    <property type="match status" value="1"/>
</dbReference>
<dbReference type="Gene3D" id="3.40.1110.10">
    <property type="entry name" value="Calcium-transporting ATPase, cytoplasmic domain N"/>
    <property type="match status" value="1"/>
</dbReference>
<dbReference type="Gene3D" id="2.70.150.10">
    <property type="entry name" value="Calcium-transporting ATPase, cytoplasmic transduction domain A"/>
    <property type="match status" value="1"/>
</dbReference>
<dbReference type="Gene3D" id="3.40.50.1000">
    <property type="entry name" value="HAD superfamily/HAD-like"/>
    <property type="match status" value="1"/>
</dbReference>
<dbReference type="HAMAP" id="MF_00285">
    <property type="entry name" value="KdpB"/>
    <property type="match status" value="1"/>
</dbReference>
<dbReference type="InterPro" id="IPR023299">
    <property type="entry name" value="ATPase_P-typ_cyto_dom_N"/>
</dbReference>
<dbReference type="InterPro" id="IPR018303">
    <property type="entry name" value="ATPase_P-typ_P_site"/>
</dbReference>
<dbReference type="InterPro" id="IPR023298">
    <property type="entry name" value="ATPase_P-typ_TM_dom_sf"/>
</dbReference>
<dbReference type="InterPro" id="IPR008250">
    <property type="entry name" value="ATPase_P-typ_transduc_dom_A_sf"/>
</dbReference>
<dbReference type="InterPro" id="IPR036412">
    <property type="entry name" value="HAD-like_sf"/>
</dbReference>
<dbReference type="InterPro" id="IPR023214">
    <property type="entry name" value="HAD_sf"/>
</dbReference>
<dbReference type="InterPro" id="IPR006391">
    <property type="entry name" value="P-type_ATPase_bsu_IA"/>
</dbReference>
<dbReference type="InterPro" id="IPR001757">
    <property type="entry name" value="P_typ_ATPase"/>
</dbReference>
<dbReference type="InterPro" id="IPR044492">
    <property type="entry name" value="P_typ_ATPase_HD_dom"/>
</dbReference>
<dbReference type="NCBIfam" id="TIGR01494">
    <property type="entry name" value="ATPase_P-type"/>
    <property type="match status" value="2"/>
</dbReference>
<dbReference type="NCBIfam" id="TIGR01497">
    <property type="entry name" value="kdpB"/>
    <property type="match status" value="1"/>
</dbReference>
<dbReference type="PANTHER" id="PTHR43743">
    <property type="entry name" value="POTASSIUM-TRANSPORTING ATPASE ATP-BINDING SUBUNIT"/>
    <property type="match status" value="1"/>
</dbReference>
<dbReference type="PANTHER" id="PTHR43743:SF1">
    <property type="entry name" value="POTASSIUM-TRANSPORTING ATPASE ATP-BINDING SUBUNIT"/>
    <property type="match status" value="1"/>
</dbReference>
<dbReference type="Pfam" id="PF00122">
    <property type="entry name" value="E1-E2_ATPase"/>
    <property type="match status" value="1"/>
</dbReference>
<dbReference type="Pfam" id="PF00702">
    <property type="entry name" value="Hydrolase"/>
    <property type="match status" value="1"/>
</dbReference>
<dbReference type="PRINTS" id="PR00119">
    <property type="entry name" value="CATATPASE"/>
</dbReference>
<dbReference type="SFLD" id="SFLDG00002">
    <property type="entry name" value="C1.7:_P-type_atpase_like"/>
    <property type="match status" value="1"/>
</dbReference>
<dbReference type="SFLD" id="SFLDF00027">
    <property type="entry name" value="p-type_atpase"/>
    <property type="match status" value="1"/>
</dbReference>
<dbReference type="SUPFAM" id="SSF81653">
    <property type="entry name" value="Calcium ATPase, transduction domain A"/>
    <property type="match status" value="1"/>
</dbReference>
<dbReference type="SUPFAM" id="SSF81665">
    <property type="entry name" value="Calcium ATPase, transmembrane domain M"/>
    <property type="match status" value="1"/>
</dbReference>
<dbReference type="SUPFAM" id="SSF56784">
    <property type="entry name" value="HAD-like"/>
    <property type="match status" value="1"/>
</dbReference>
<dbReference type="SUPFAM" id="SSF81660">
    <property type="entry name" value="Metal cation-transporting ATPase, ATP-binding domain N"/>
    <property type="match status" value="1"/>
</dbReference>
<dbReference type="PROSITE" id="PS00154">
    <property type="entry name" value="ATPASE_E1_E2"/>
    <property type="match status" value="1"/>
</dbReference>
<name>KDPB_ECO81</name>